<sequence length="236" mass="24757">MAKRSKAYRAAAEKIEAGKFYAPAEAVALAKELAEGSKSDPTVEVAMRLGVDPRKADQMVRGTVNLPNGTGKTARVVVFATGDKAAAAEAAGADFVGNDDLIARIQGGWTDFDAAVATPDMMGKVGRLGKILGPRNLMPNPKTGTVTMDVAKAVNDIKGGKIDFRVDKHSNLHFIIGKASFDAQKLAENYGAALEEVLRLKPSASKGRYITKATVATTFGPGIPVDPNATEVTTQA</sequence>
<organism>
    <name type="scientific">Kocuria rhizophila (strain ATCC 9341 / DSM 348 / NBRC 103217 / DC2201)</name>
    <dbReference type="NCBI Taxonomy" id="378753"/>
    <lineage>
        <taxon>Bacteria</taxon>
        <taxon>Bacillati</taxon>
        <taxon>Actinomycetota</taxon>
        <taxon>Actinomycetes</taxon>
        <taxon>Micrococcales</taxon>
        <taxon>Micrococcaceae</taxon>
        <taxon>Kocuria</taxon>
    </lineage>
</organism>
<gene>
    <name evidence="1" type="primary">rplA</name>
    <name type="ordered locus">KRH_05860</name>
</gene>
<evidence type="ECO:0000255" key="1">
    <source>
        <dbReference type="HAMAP-Rule" id="MF_01318"/>
    </source>
</evidence>
<evidence type="ECO:0000305" key="2"/>
<name>RL1_KOCRD</name>
<accession>B2GII4</accession>
<protein>
    <recommendedName>
        <fullName evidence="1">Large ribosomal subunit protein uL1</fullName>
    </recommendedName>
    <alternativeName>
        <fullName evidence="2">50S ribosomal protein L1</fullName>
    </alternativeName>
</protein>
<feature type="chain" id="PRO_1000141416" description="Large ribosomal subunit protein uL1">
    <location>
        <begin position="1"/>
        <end position="236"/>
    </location>
</feature>
<dbReference type="EMBL" id="AP009152">
    <property type="protein sequence ID" value="BAG28933.1"/>
    <property type="molecule type" value="Genomic_DNA"/>
</dbReference>
<dbReference type="RefSeq" id="WP_012397659.1">
    <property type="nucleotide sequence ID" value="NC_010617.1"/>
</dbReference>
<dbReference type="SMR" id="B2GII4"/>
<dbReference type="STRING" id="378753.KRH_05860"/>
<dbReference type="KEGG" id="krh:KRH_05860"/>
<dbReference type="eggNOG" id="COG0081">
    <property type="taxonomic scope" value="Bacteria"/>
</dbReference>
<dbReference type="HOGENOM" id="CLU_062853_0_0_11"/>
<dbReference type="OrthoDB" id="9803740at2"/>
<dbReference type="Proteomes" id="UP000008838">
    <property type="component" value="Chromosome"/>
</dbReference>
<dbReference type="GO" id="GO:0015934">
    <property type="term" value="C:large ribosomal subunit"/>
    <property type="evidence" value="ECO:0007669"/>
    <property type="project" value="InterPro"/>
</dbReference>
<dbReference type="GO" id="GO:0019843">
    <property type="term" value="F:rRNA binding"/>
    <property type="evidence" value="ECO:0007669"/>
    <property type="project" value="UniProtKB-UniRule"/>
</dbReference>
<dbReference type="GO" id="GO:0003735">
    <property type="term" value="F:structural constituent of ribosome"/>
    <property type="evidence" value="ECO:0007669"/>
    <property type="project" value="InterPro"/>
</dbReference>
<dbReference type="GO" id="GO:0000049">
    <property type="term" value="F:tRNA binding"/>
    <property type="evidence" value="ECO:0007669"/>
    <property type="project" value="UniProtKB-KW"/>
</dbReference>
<dbReference type="GO" id="GO:0006417">
    <property type="term" value="P:regulation of translation"/>
    <property type="evidence" value="ECO:0007669"/>
    <property type="project" value="UniProtKB-KW"/>
</dbReference>
<dbReference type="GO" id="GO:0006412">
    <property type="term" value="P:translation"/>
    <property type="evidence" value="ECO:0007669"/>
    <property type="project" value="UniProtKB-UniRule"/>
</dbReference>
<dbReference type="CDD" id="cd00403">
    <property type="entry name" value="Ribosomal_L1"/>
    <property type="match status" value="1"/>
</dbReference>
<dbReference type="FunFam" id="3.40.50.790:FF:000001">
    <property type="entry name" value="50S ribosomal protein L1"/>
    <property type="match status" value="1"/>
</dbReference>
<dbReference type="Gene3D" id="3.30.190.20">
    <property type="match status" value="1"/>
</dbReference>
<dbReference type="Gene3D" id="3.40.50.790">
    <property type="match status" value="1"/>
</dbReference>
<dbReference type="HAMAP" id="MF_01318_B">
    <property type="entry name" value="Ribosomal_uL1_B"/>
    <property type="match status" value="1"/>
</dbReference>
<dbReference type="InterPro" id="IPR005878">
    <property type="entry name" value="Ribosom_uL1_bac-type"/>
</dbReference>
<dbReference type="InterPro" id="IPR002143">
    <property type="entry name" value="Ribosomal_uL1"/>
</dbReference>
<dbReference type="InterPro" id="IPR023674">
    <property type="entry name" value="Ribosomal_uL1-like"/>
</dbReference>
<dbReference type="InterPro" id="IPR028364">
    <property type="entry name" value="Ribosomal_uL1/biogenesis"/>
</dbReference>
<dbReference type="InterPro" id="IPR016095">
    <property type="entry name" value="Ribosomal_uL1_3-a/b-sand"/>
</dbReference>
<dbReference type="InterPro" id="IPR023673">
    <property type="entry name" value="Ribosomal_uL1_CS"/>
</dbReference>
<dbReference type="NCBIfam" id="TIGR01169">
    <property type="entry name" value="rplA_bact"/>
    <property type="match status" value="1"/>
</dbReference>
<dbReference type="PANTHER" id="PTHR36427">
    <property type="entry name" value="54S RIBOSOMAL PROTEIN L1, MITOCHONDRIAL"/>
    <property type="match status" value="1"/>
</dbReference>
<dbReference type="PANTHER" id="PTHR36427:SF3">
    <property type="entry name" value="LARGE RIBOSOMAL SUBUNIT PROTEIN UL1M"/>
    <property type="match status" value="1"/>
</dbReference>
<dbReference type="Pfam" id="PF00687">
    <property type="entry name" value="Ribosomal_L1"/>
    <property type="match status" value="1"/>
</dbReference>
<dbReference type="PIRSF" id="PIRSF002155">
    <property type="entry name" value="Ribosomal_L1"/>
    <property type="match status" value="1"/>
</dbReference>
<dbReference type="SUPFAM" id="SSF56808">
    <property type="entry name" value="Ribosomal protein L1"/>
    <property type="match status" value="1"/>
</dbReference>
<dbReference type="PROSITE" id="PS01199">
    <property type="entry name" value="RIBOSOMAL_L1"/>
    <property type="match status" value="1"/>
</dbReference>
<keyword id="KW-1185">Reference proteome</keyword>
<keyword id="KW-0678">Repressor</keyword>
<keyword id="KW-0687">Ribonucleoprotein</keyword>
<keyword id="KW-0689">Ribosomal protein</keyword>
<keyword id="KW-0694">RNA-binding</keyword>
<keyword id="KW-0699">rRNA-binding</keyword>
<keyword id="KW-0810">Translation regulation</keyword>
<keyword id="KW-0820">tRNA-binding</keyword>
<reference key="1">
    <citation type="journal article" date="2008" name="J. Bacteriol.">
        <title>Complete genome sequence of the soil actinomycete Kocuria rhizophila.</title>
        <authorList>
            <person name="Takarada H."/>
            <person name="Sekine M."/>
            <person name="Kosugi H."/>
            <person name="Matsuo Y."/>
            <person name="Fujisawa T."/>
            <person name="Omata S."/>
            <person name="Kishi E."/>
            <person name="Shimizu A."/>
            <person name="Tsukatani N."/>
            <person name="Tanikawa S."/>
            <person name="Fujita N."/>
            <person name="Harayama S."/>
        </authorList>
    </citation>
    <scope>NUCLEOTIDE SEQUENCE [LARGE SCALE GENOMIC DNA]</scope>
    <source>
        <strain>ATCC 9341 / DSM 348 / NBRC 103217 / DC2201</strain>
    </source>
</reference>
<comment type="function">
    <text evidence="1">Binds directly to 23S rRNA. The L1 stalk is quite mobile in the ribosome, and is involved in E site tRNA release.</text>
</comment>
<comment type="function">
    <text evidence="1">Protein L1 is also a translational repressor protein, it controls the translation of the L11 operon by binding to its mRNA.</text>
</comment>
<comment type="subunit">
    <text evidence="1">Part of the 50S ribosomal subunit.</text>
</comment>
<comment type="similarity">
    <text evidence="1">Belongs to the universal ribosomal protein uL1 family.</text>
</comment>
<proteinExistence type="inferred from homology"/>